<proteinExistence type="evidence at transcript level"/>
<dbReference type="EMBL" id="AE014296">
    <property type="protein sequence ID" value="AAF49617.2"/>
    <property type="molecule type" value="Genomic_DNA"/>
</dbReference>
<dbReference type="EMBL" id="AY118412">
    <property type="protein sequence ID" value="AAM48441.1"/>
    <property type="molecule type" value="mRNA"/>
</dbReference>
<dbReference type="RefSeq" id="NP_001261883.1">
    <property type="nucleotide sequence ID" value="NM_001274954.1"/>
</dbReference>
<dbReference type="RefSeq" id="NP_648777.1">
    <property type="nucleotide sequence ID" value="NM_140520.4"/>
</dbReference>
<dbReference type="SMR" id="Q9VUQ8"/>
<dbReference type="BioGRID" id="65004">
    <property type="interactions" value="6"/>
</dbReference>
<dbReference type="DIP" id="DIP-19770N"/>
<dbReference type="FunCoup" id="Q9VUQ8">
    <property type="interactions" value="1498"/>
</dbReference>
<dbReference type="IntAct" id="Q9VUQ8">
    <property type="interactions" value="7"/>
</dbReference>
<dbReference type="STRING" id="7227.FBpp0297285"/>
<dbReference type="PaxDb" id="7227-FBpp0297285"/>
<dbReference type="DNASU" id="39685"/>
<dbReference type="EnsemblMetazoa" id="FBtr0075561">
    <property type="protein sequence ID" value="FBpp0075314"/>
    <property type="gene ID" value="FBgn0036510"/>
</dbReference>
<dbReference type="EnsemblMetazoa" id="FBtr0331934">
    <property type="protein sequence ID" value="FBpp0304267"/>
    <property type="gene ID" value="FBgn0036510"/>
</dbReference>
<dbReference type="GeneID" id="39685"/>
<dbReference type="KEGG" id="dme:Dmel_CG7427"/>
<dbReference type="UCSC" id="CG7427-RA">
    <property type="organism name" value="d. melanogaster"/>
</dbReference>
<dbReference type="AGR" id="FB:FBgn0036510"/>
<dbReference type="CTD" id="39685"/>
<dbReference type="FlyBase" id="FBgn0036510">
    <property type="gene designation" value="SCCRO"/>
</dbReference>
<dbReference type="VEuPathDB" id="VectorBase:FBgn0036510"/>
<dbReference type="eggNOG" id="KOG3077">
    <property type="taxonomic scope" value="Eukaryota"/>
</dbReference>
<dbReference type="GeneTree" id="ENSGT00940000168836"/>
<dbReference type="HOGENOM" id="CLU_047042_0_1_1"/>
<dbReference type="InParanoid" id="Q9VUQ8"/>
<dbReference type="OrthoDB" id="286637at2759"/>
<dbReference type="PhylomeDB" id="Q9VUQ8"/>
<dbReference type="Reactome" id="R-DME-8951664">
    <property type="pathway name" value="Neddylation"/>
</dbReference>
<dbReference type="BioGRID-ORCS" id="39685">
    <property type="hits" value="0 hits in 3 CRISPR screens"/>
</dbReference>
<dbReference type="GenomeRNAi" id="39685"/>
<dbReference type="PRO" id="PR:Q9VUQ8"/>
<dbReference type="Proteomes" id="UP000000803">
    <property type="component" value="Chromosome 3L"/>
</dbReference>
<dbReference type="Bgee" id="FBgn0036510">
    <property type="expression patterns" value="Expressed in dorsal appendage forming follicle cell in ovary and 159 other cell types or tissues"/>
</dbReference>
<dbReference type="ExpressionAtlas" id="Q9VUQ8">
    <property type="expression patterns" value="baseline and differential"/>
</dbReference>
<dbReference type="GO" id="GO:0005737">
    <property type="term" value="C:cytoplasm"/>
    <property type="evidence" value="ECO:0000250"/>
    <property type="project" value="UniProtKB"/>
</dbReference>
<dbReference type="GO" id="GO:0005634">
    <property type="term" value="C:nucleus"/>
    <property type="evidence" value="ECO:0000314"/>
    <property type="project" value="FlyBase"/>
</dbReference>
<dbReference type="GO" id="GO:0000151">
    <property type="term" value="C:ubiquitin ligase complex"/>
    <property type="evidence" value="ECO:0000318"/>
    <property type="project" value="GO_Central"/>
</dbReference>
<dbReference type="GO" id="GO:0097602">
    <property type="term" value="F:cullin family protein binding"/>
    <property type="evidence" value="ECO:0000318"/>
    <property type="project" value="GO_Central"/>
</dbReference>
<dbReference type="GO" id="GO:0031624">
    <property type="term" value="F:ubiquitin conjugating enzyme binding"/>
    <property type="evidence" value="ECO:0000318"/>
    <property type="project" value="GO_Central"/>
</dbReference>
<dbReference type="GO" id="GO:0032182">
    <property type="term" value="F:ubiquitin-like protein binding"/>
    <property type="evidence" value="ECO:0000318"/>
    <property type="project" value="GO_Central"/>
</dbReference>
<dbReference type="GO" id="GO:0035212">
    <property type="term" value="P:cell competition in a multicellular organism"/>
    <property type="evidence" value="ECO:0000315"/>
    <property type="project" value="FlyBase"/>
</dbReference>
<dbReference type="GO" id="GO:2000436">
    <property type="term" value="P:positive regulation of protein neddylation"/>
    <property type="evidence" value="ECO:0000315"/>
    <property type="project" value="FlyBase"/>
</dbReference>
<dbReference type="GO" id="GO:0045116">
    <property type="term" value="P:protein neddylation"/>
    <property type="evidence" value="ECO:0000250"/>
    <property type="project" value="UniProtKB"/>
</dbReference>
<dbReference type="FunFam" id="1.10.238.10:FF:000030">
    <property type="entry name" value="DCN1-like protein"/>
    <property type="match status" value="1"/>
</dbReference>
<dbReference type="FunFam" id="1.10.238.200:FF:000001">
    <property type="entry name" value="DCN1-like protein"/>
    <property type="match status" value="1"/>
</dbReference>
<dbReference type="Gene3D" id="1.10.238.200">
    <property type="entry name" value="Cullin, PONY binding domain"/>
    <property type="match status" value="1"/>
</dbReference>
<dbReference type="Gene3D" id="1.10.8.10">
    <property type="entry name" value="DNA helicase RuvA subunit, C-terminal domain"/>
    <property type="match status" value="1"/>
</dbReference>
<dbReference type="Gene3D" id="1.10.238.10">
    <property type="entry name" value="EF-hand"/>
    <property type="match status" value="1"/>
</dbReference>
<dbReference type="InterPro" id="IPR014764">
    <property type="entry name" value="DCN-prot"/>
</dbReference>
<dbReference type="InterPro" id="IPR042460">
    <property type="entry name" value="DCN1-like_PONY"/>
</dbReference>
<dbReference type="InterPro" id="IPR005176">
    <property type="entry name" value="PONY_dom"/>
</dbReference>
<dbReference type="InterPro" id="IPR009060">
    <property type="entry name" value="UBA-like_sf"/>
</dbReference>
<dbReference type="PANTHER" id="PTHR12281:SF32">
    <property type="entry name" value="DCN1-LIKE PROTEIN"/>
    <property type="match status" value="1"/>
</dbReference>
<dbReference type="PANTHER" id="PTHR12281">
    <property type="entry name" value="RP42 RELATED"/>
    <property type="match status" value="1"/>
</dbReference>
<dbReference type="Pfam" id="PF03556">
    <property type="entry name" value="Cullin_binding"/>
    <property type="match status" value="1"/>
</dbReference>
<dbReference type="Pfam" id="PF14555">
    <property type="entry name" value="UBA_4"/>
    <property type="match status" value="1"/>
</dbReference>
<dbReference type="SUPFAM" id="SSF46934">
    <property type="entry name" value="UBA-like"/>
    <property type="match status" value="1"/>
</dbReference>
<dbReference type="PROSITE" id="PS51229">
    <property type="entry name" value="DCUN1"/>
    <property type="match status" value="1"/>
</dbReference>
<evidence type="ECO:0000250" key="1">
    <source>
        <dbReference type="UniProtKB" id="Q96GG9"/>
    </source>
</evidence>
<evidence type="ECO:0000255" key="2">
    <source>
        <dbReference type="PROSITE-ProRule" id="PRU00574"/>
    </source>
</evidence>
<evidence type="ECO:0000256" key="3">
    <source>
        <dbReference type="SAM" id="MobiDB-lite"/>
    </source>
</evidence>
<evidence type="ECO:0000269" key="4">
    <source>
    </source>
</evidence>
<evidence type="ECO:0000303" key="5">
    <source>
    </source>
</evidence>
<evidence type="ECO:0000305" key="6"/>
<evidence type="ECO:0000312" key="7">
    <source>
        <dbReference type="FlyBase" id="FBgn0036510"/>
    </source>
</evidence>
<name>DCNL1_DROME</name>
<keyword id="KW-0539">Nucleus</keyword>
<keyword id="KW-1185">Reference proteome</keyword>
<keyword id="KW-0833">Ubl conjugation pathway</keyword>
<feature type="chain" id="PRO_0000129508" description="DCN1-like protein 1">
    <location>
        <begin position="1"/>
        <end position="288"/>
    </location>
</feature>
<feature type="domain" description="UBA-like">
    <location>
        <begin position="9"/>
        <end position="46"/>
    </location>
</feature>
<feature type="domain" description="DCUN1" evidence="2">
    <location>
        <begin position="56"/>
        <end position="244"/>
    </location>
</feature>
<feature type="region of interest" description="Disordered" evidence="3">
    <location>
        <begin position="249"/>
        <end position="288"/>
    </location>
</feature>
<feature type="compositionally biased region" description="Low complexity" evidence="3">
    <location>
        <begin position="254"/>
        <end position="278"/>
    </location>
</feature>
<feature type="compositionally biased region" description="Polar residues" evidence="3">
    <location>
        <begin position="279"/>
        <end position="288"/>
    </location>
</feature>
<accession>Q9VUQ8</accession>
<gene>
    <name evidence="5 7" type="primary">SCCRO</name>
    <name evidence="6" type="synonym">Dcun1d1</name>
    <name evidence="7" type="ORF">CG7427</name>
</gene>
<sequence length="288" mass="33695">MNKLKSSTHRDKVKKFISLTHTGEQTAIFCLQQNDWKFELASDNYFQNPEYYYRELDRKRIEQLFMRYRDPSDPLKIGSQGVIHFLEDLDLKPDSKLVLIIAWKFHAEVQCEFSRDEFINGMCDLGIDSIDKLKTKLPILEQELNDAGKFKDFYHFTFNYAKDPGQKGIDLEMAIAYWCIVLSGRFKFLDIWCQFLEEKHKRAISRDTWNLLLDFATNIDDRMSNYDSEGAWPVLIDDFVEWCQENDHLKEDSSPASGYQQQSSASSSSQKNISSAYQTSHSTNMNYG</sequence>
<comment type="function">
    <text evidence="4">Promotes neddylation of cullin components of SCF-type E3 ubiquitin ligase complexes and thus regulates SCF-type complex activity (PubMed:26792857). Function promotes cell proliferation (PubMed:26792857).</text>
</comment>
<comment type="subunit">
    <text>Interacts with the cullin cul-5.</text>
</comment>
<comment type="subcellular location">
    <subcellularLocation>
        <location evidence="4">Nucleus</location>
    </subcellularLocation>
    <text evidence="4">Predominantly localizes to the nucleus in eye imaginal disk cells.</text>
</comment>
<comment type="disruption phenotype">
    <text evidence="4">Viable but with decreased survival (PubMed:26792857). Adults display abnormal locomotor behavior and mutant females produce less offspring with wild-type males (PubMed:26792857). Third instar larvae display a reduced response to touch (PubMed:26792857). No gross morphological defects (PubMed:26792857). Ubiquitous, but likely imbalanced, RNAi-mediated knockdown is lethal (PubMed:26792857). RNAi-mediated knockdown in embryo eye primordial cells, produces small, rough eyes, (PubMed:26792857). RNAi-mediated knockdown in the middle wing patch, results in a significant reduction in the L3-L4 distance due to a decrease in cell number, whereas cell size is unaffected (PubMed:26792857).</text>
</comment>
<protein>
    <recommendedName>
        <fullName evidence="6">DCN1-like protein 1</fullName>
        <shortName evidence="1">DCNL1</shortName>
    </recommendedName>
    <alternativeName>
        <fullName evidence="5">DCUN1 domain-containing protein 1</fullName>
    </alternativeName>
    <alternativeName>
        <fullName evidence="5">Defective in cullin neddylation protein 1-like protein 1</fullName>
    </alternativeName>
    <alternativeName>
        <fullName evidence="5">Squamous cell carcinoma-related oncogene</fullName>
    </alternativeName>
</protein>
<reference key="1">
    <citation type="journal article" date="2000" name="Science">
        <title>The genome sequence of Drosophila melanogaster.</title>
        <authorList>
            <person name="Adams M.D."/>
            <person name="Celniker S.E."/>
            <person name="Holt R.A."/>
            <person name="Evans C.A."/>
            <person name="Gocayne J.D."/>
            <person name="Amanatides P.G."/>
            <person name="Scherer S.E."/>
            <person name="Li P.W."/>
            <person name="Hoskins R.A."/>
            <person name="Galle R.F."/>
            <person name="George R.A."/>
            <person name="Lewis S.E."/>
            <person name="Richards S."/>
            <person name="Ashburner M."/>
            <person name="Henderson S.N."/>
            <person name="Sutton G.G."/>
            <person name="Wortman J.R."/>
            <person name="Yandell M.D."/>
            <person name="Zhang Q."/>
            <person name="Chen L.X."/>
            <person name="Brandon R.C."/>
            <person name="Rogers Y.-H.C."/>
            <person name="Blazej R.G."/>
            <person name="Champe M."/>
            <person name="Pfeiffer B.D."/>
            <person name="Wan K.H."/>
            <person name="Doyle C."/>
            <person name="Baxter E.G."/>
            <person name="Helt G."/>
            <person name="Nelson C.R."/>
            <person name="Miklos G.L.G."/>
            <person name="Abril J.F."/>
            <person name="Agbayani A."/>
            <person name="An H.-J."/>
            <person name="Andrews-Pfannkoch C."/>
            <person name="Baldwin D."/>
            <person name="Ballew R.M."/>
            <person name="Basu A."/>
            <person name="Baxendale J."/>
            <person name="Bayraktaroglu L."/>
            <person name="Beasley E.M."/>
            <person name="Beeson K.Y."/>
            <person name="Benos P.V."/>
            <person name="Berman B.P."/>
            <person name="Bhandari D."/>
            <person name="Bolshakov S."/>
            <person name="Borkova D."/>
            <person name="Botchan M.R."/>
            <person name="Bouck J."/>
            <person name="Brokstein P."/>
            <person name="Brottier P."/>
            <person name="Burtis K.C."/>
            <person name="Busam D.A."/>
            <person name="Butler H."/>
            <person name="Cadieu E."/>
            <person name="Center A."/>
            <person name="Chandra I."/>
            <person name="Cherry J.M."/>
            <person name="Cawley S."/>
            <person name="Dahlke C."/>
            <person name="Davenport L.B."/>
            <person name="Davies P."/>
            <person name="de Pablos B."/>
            <person name="Delcher A."/>
            <person name="Deng Z."/>
            <person name="Mays A.D."/>
            <person name="Dew I."/>
            <person name="Dietz S.M."/>
            <person name="Dodson K."/>
            <person name="Doup L.E."/>
            <person name="Downes M."/>
            <person name="Dugan-Rocha S."/>
            <person name="Dunkov B.C."/>
            <person name="Dunn P."/>
            <person name="Durbin K.J."/>
            <person name="Evangelista C.C."/>
            <person name="Ferraz C."/>
            <person name="Ferriera S."/>
            <person name="Fleischmann W."/>
            <person name="Fosler C."/>
            <person name="Gabrielian A.E."/>
            <person name="Garg N.S."/>
            <person name="Gelbart W.M."/>
            <person name="Glasser K."/>
            <person name="Glodek A."/>
            <person name="Gong F."/>
            <person name="Gorrell J.H."/>
            <person name="Gu Z."/>
            <person name="Guan P."/>
            <person name="Harris M."/>
            <person name="Harris N.L."/>
            <person name="Harvey D.A."/>
            <person name="Heiman T.J."/>
            <person name="Hernandez J.R."/>
            <person name="Houck J."/>
            <person name="Hostin D."/>
            <person name="Houston K.A."/>
            <person name="Howland T.J."/>
            <person name="Wei M.-H."/>
            <person name="Ibegwam C."/>
            <person name="Jalali M."/>
            <person name="Kalush F."/>
            <person name="Karpen G.H."/>
            <person name="Ke Z."/>
            <person name="Kennison J.A."/>
            <person name="Ketchum K.A."/>
            <person name="Kimmel B.E."/>
            <person name="Kodira C.D."/>
            <person name="Kraft C.L."/>
            <person name="Kravitz S."/>
            <person name="Kulp D."/>
            <person name="Lai Z."/>
            <person name="Lasko P."/>
            <person name="Lei Y."/>
            <person name="Levitsky A.A."/>
            <person name="Li J.H."/>
            <person name="Li Z."/>
            <person name="Liang Y."/>
            <person name="Lin X."/>
            <person name="Liu X."/>
            <person name="Mattei B."/>
            <person name="McIntosh T.C."/>
            <person name="McLeod M.P."/>
            <person name="McPherson D."/>
            <person name="Merkulov G."/>
            <person name="Milshina N.V."/>
            <person name="Mobarry C."/>
            <person name="Morris J."/>
            <person name="Moshrefi A."/>
            <person name="Mount S.M."/>
            <person name="Moy M."/>
            <person name="Murphy B."/>
            <person name="Murphy L."/>
            <person name="Muzny D.M."/>
            <person name="Nelson D.L."/>
            <person name="Nelson D.R."/>
            <person name="Nelson K.A."/>
            <person name="Nixon K."/>
            <person name="Nusskern D.R."/>
            <person name="Pacleb J.M."/>
            <person name="Palazzolo M."/>
            <person name="Pittman G.S."/>
            <person name="Pan S."/>
            <person name="Pollard J."/>
            <person name="Puri V."/>
            <person name="Reese M.G."/>
            <person name="Reinert K."/>
            <person name="Remington K."/>
            <person name="Saunders R.D.C."/>
            <person name="Scheeler F."/>
            <person name="Shen H."/>
            <person name="Shue B.C."/>
            <person name="Siden-Kiamos I."/>
            <person name="Simpson M."/>
            <person name="Skupski M.P."/>
            <person name="Smith T.J."/>
            <person name="Spier E."/>
            <person name="Spradling A.C."/>
            <person name="Stapleton M."/>
            <person name="Strong R."/>
            <person name="Sun E."/>
            <person name="Svirskas R."/>
            <person name="Tector C."/>
            <person name="Turner R."/>
            <person name="Venter E."/>
            <person name="Wang A.H."/>
            <person name="Wang X."/>
            <person name="Wang Z.-Y."/>
            <person name="Wassarman D.A."/>
            <person name="Weinstock G.M."/>
            <person name="Weissenbach J."/>
            <person name="Williams S.M."/>
            <person name="Woodage T."/>
            <person name="Worley K.C."/>
            <person name="Wu D."/>
            <person name="Yang S."/>
            <person name="Yao Q.A."/>
            <person name="Ye J."/>
            <person name="Yeh R.-F."/>
            <person name="Zaveri J.S."/>
            <person name="Zhan M."/>
            <person name="Zhang G."/>
            <person name="Zhao Q."/>
            <person name="Zheng L."/>
            <person name="Zheng X.H."/>
            <person name="Zhong F.N."/>
            <person name="Zhong W."/>
            <person name="Zhou X."/>
            <person name="Zhu S.C."/>
            <person name="Zhu X."/>
            <person name="Smith H.O."/>
            <person name="Gibbs R.A."/>
            <person name="Myers E.W."/>
            <person name="Rubin G.M."/>
            <person name="Venter J.C."/>
        </authorList>
    </citation>
    <scope>NUCLEOTIDE SEQUENCE [LARGE SCALE GENOMIC DNA]</scope>
    <source>
        <strain>Berkeley</strain>
    </source>
</reference>
<reference key="2">
    <citation type="journal article" date="2002" name="Genome Biol.">
        <title>Annotation of the Drosophila melanogaster euchromatic genome: a systematic review.</title>
        <authorList>
            <person name="Misra S."/>
            <person name="Crosby M.A."/>
            <person name="Mungall C.J."/>
            <person name="Matthews B.B."/>
            <person name="Campbell K.S."/>
            <person name="Hradecky P."/>
            <person name="Huang Y."/>
            <person name="Kaminker J.S."/>
            <person name="Millburn G.H."/>
            <person name="Prochnik S.E."/>
            <person name="Smith C.D."/>
            <person name="Tupy J.L."/>
            <person name="Whitfield E.J."/>
            <person name="Bayraktaroglu L."/>
            <person name="Berman B.P."/>
            <person name="Bettencourt B.R."/>
            <person name="Celniker S.E."/>
            <person name="de Grey A.D.N.J."/>
            <person name="Drysdale R.A."/>
            <person name="Harris N.L."/>
            <person name="Richter J."/>
            <person name="Russo S."/>
            <person name="Schroeder A.J."/>
            <person name="Shu S.Q."/>
            <person name="Stapleton M."/>
            <person name="Yamada C."/>
            <person name="Ashburner M."/>
            <person name="Gelbart W.M."/>
            <person name="Rubin G.M."/>
            <person name="Lewis S.E."/>
        </authorList>
    </citation>
    <scope>GENOME REANNOTATION</scope>
    <source>
        <strain>Berkeley</strain>
    </source>
</reference>
<reference key="3">
    <citation type="journal article" date="2002" name="Genome Biol.">
        <title>A Drosophila full-length cDNA resource.</title>
        <authorList>
            <person name="Stapleton M."/>
            <person name="Carlson J.W."/>
            <person name="Brokstein P."/>
            <person name="Yu C."/>
            <person name="Champe M."/>
            <person name="George R.A."/>
            <person name="Guarin H."/>
            <person name="Kronmiller B."/>
            <person name="Pacleb J.M."/>
            <person name="Park S."/>
            <person name="Wan K.H."/>
            <person name="Rubin G.M."/>
            <person name="Celniker S.E."/>
        </authorList>
    </citation>
    <scope>NUCLEOTIDE SEQUENCE [LARGE SCALE MRNA]</scope>
    <source>
        <strain>Berkeley</strain>
        <tissue>Embryo</tissue>
    </source>
</reference>
<reference key="4">
    <citation type="journal article" date="2016" name="J. Biol. Chem.">
        <title>Squamous Cell Carcinoma-related Oncogene (SCCRO) Family Members Regulate Cell Growth and Proliferation through Their Cooperative and Antagonistic Effects on Cullin Neddylation.</title>
        <authorList>
            <person name="Fu W."/>
            <person name="Sun J."/>
            <person name="Huang G."/>
            <person name="Liu J.C."/>
            <person name="Kaufman A."/>
            <person name="Ryan R.J."/>
            <person name="Ramanathan S.Y."/>
            <person name="Venkatesh T."/>
            <person name="Singh B."/>
        </authorList>
    </citation>
    <scope>FUNCTION</scope>
    <scope>SUBCELLULAR LOCATION</scope>
    <scope>DISRUPTION PHENOTYPE</scope>
</reference>
<organism>
    <name type="scientific">Drosophila melanogaster</name>
    <name type="common">Fruit fly</name>
    <dbReference type="NCBI Taxonomy" id="7227"/>
    <lineage>
        <taxon>Eukaryota</taxon>
        <taxon>Metazoa</taxon>
        <taxon>Ecdysozoa</taxon>
        <taxon>Arthropoda</taxon>
        <taxon>Hexapoda</taxon>
        <taxon>Insecta</taxon>
        <taxon>Pterygota</taxon>
        <taxon>Neoptera</taxon>
        <taxon>Endopterygota</taxon>
        <taxon>Diptera</taxon>
        <taxon>Brachycera</taxon>
        <taxon>Muscomorpha</taxon>
        <taxon>Ephydroidea</taxon>
        <taxon>Drosophilidae</taxon>
        <taxon>Drosophila</taxon>
        <taxon>Sophophora</taxon>
    </lineage>
</organism>